<accession>Q58044</accession>
<sequence>MEIDVKSPDLIINTIRGNEKIYFDKSIFEESLDNKFEIIQYLMKILERFLKIYDNHIKEIKLLIDSENHPEPHLIVVIKFKNKENIFKISEQIENKIYENPKSKNVLVYPITGGTDV</sequence>
<gene>
    <name type="ordered locus">MJ0627</name>
</gene>
<proteinExistence type="predicted"/>
<keyword id="KW-1185">Reference proteome</keyword>
<name>Y627_METJA</name>
<reference key="1">
    <citation type="journal article" date="1996" name="Science">
        <title>Complete genome sequence of the methanogenic archaeon, Methanococcus jannaschii.</title>
        <authorList>
            <person name="Bult C.J."/>
            <person name="White O."/>
            <person name="Olsen G.J."/>
            <person name="Zhou L."/>
            <person name="Fleischmann R.D."/>
            <person name="Sutton G.G."/>
            <person name="Blake J.A."/>
            <person name="FitzGerald L.M."/>
            <person name="Clayton R.A."/>
            <person name="Gocayne J.D."/>
            <person name="Kerlavage A.R."/>
            <person name="Dougherty B.A."/>
            <person name="Tomb J.-F."/>
            <person name="Adams M.D."/>
            <person name="Reich C.I."/>
            <person name="Overbeek R."/>
            <person name="Kirkness E.F."/>
            <person name="Weinstock K.G."/>
            <person name="Merrick J.M."/>
            <person name="Glodek A."/>
            <person name="Scott J.L."/>
            <person name="Geoghagen N.S.M."/>
            <person name="Weidman J.F."/>
            <person name="Fuhrmann J.L."/>
            <person name="Nguyen D."/>
            <person name="Utterback T.R."/>
            <person name="Kelley J.M."/>
            <person name="Peterson J.D."/>
            <person name="Sadow P.W."/>
            <person name="Hanna M.C."/>
            <person name="Cotton M.D."/>
            <person name="Roberts K.M."/>
            <person name="Hurst M.A."/>
            <person name="Kaine B.P."/>
            <person name="Borodovsky M."/>
            <person name="Klenk H.-P."/>
            <person name="Fraser C.M."/>
            <person name="Smith H.O."/>
            <person name="Woese C.R."/>
            <person name="Venter J.C."/>
        </authorList>
    </citation>
    <scope>NUCLEOTIDE SEQUENCE [LARGE SCALE GENOMIC DNA]</scope>
    <source>
        <strain>ATCC 43067 / DSM 2661 / JAL-1 / JCM 10045 / NBRC 100440</strain>
    </source>
</reference>
<protein>
    <recommendedName>
        <fullName>Uncharacterized protein MJ0627</fullName>
    </recommendedName>
</protein>
<dbReference type="EMBL" id="L77117">
    <property type="protein sequence ID" value="AAB98626.1"/>
    <property type="molecule type" value="Genomic_DNA"/>
</dbReference>
<dbReference type="PIR" id="C64378">
    <property type="entry name" value="C64378"/>
</dbReference>
<dbReference type="RefSeq" id="WP_010870132.1">
    <property type="nucleotide sequence ID" value="NC_000909.1"/>
</dbReference>
<dbReference type="STRING" id="243232.MJ_0627"/>
<dbReference type="PaxDb" id="243232-MJ_0627"/>
<dbReference type="EnsemblBacteria" id="AAB98626">
    <property type="protein sequence ID" value="AAB98626"/>
    <property type="gene ID" value="MJ_0627"/>
</dbReference>
<dbReference type="GeneID" id="1451493"/>
<dbReference type="KEGG" id="mja:MJ_0627"/>
<dbReference type="eggNOG" id="arCOG12719">
    <property type="taxonomic scope" value="Archaea"/>
</dbReference>
<dbReference type="HOGENOM" id="CLU_2079448_0_0_2"/>
<dbReference type="InParanoid" id="Q58044"/>
<dbReference type="OrthoDB" id="374451at2157"/>
<dbReference type="Proteomes" id="UP000000805">
    <property type="component" value="Chromosome"/>
</dbReference>
<feature type="chain" id="PRO_0000106961" description="Uncharacterized protein MJ0627">
    <location>
        <begin position="1"/>
        <end position="117"/>
    </location>
</feature>
<organism>
    <name type="scientific">Methanocaldococcus jannaschii (strain ATCC 43067 / DSM 2661 / JAL-1 / JCM 10045 / NBRC 100440)</name>
    <name type="common">Methanococcus jannaschii</name>
    <dbReference type="NCBI Taxonomy" id="243232"/>
    <lineage>
        <taxon>Archaea</taxon>
        <taxon>Methanobacteriati</taxon>
        <taxon>Methanobacteriota</taxon>
        <taxon>Methanomada group</taxon>
        <taxon>Methanococci</taxon>
        <taxon>Methanococcales</taxon>
        <taxon>Methanocaldococcaceae</taxon>
        <taxon>Methanocaldococcus</taxon>
    </lineage>
</organism>